<proteinExistence type="inferred from homology"/>
<dbReference type="EMBL" id="AJ438795">
    <property type="protein sequence ID" value="CAD27639.1"/>
    <property type="molecule type" value="Genomic_DNA"/>
</dbReference>
<dbReference type="GO" id="GO:0009507">
    <property type="term" value="C:chloroplast"/>
    <property type="evidence" value="ECO:0007669"/>
    <property type="project" value="UniProtKB-SubCell"/>
</dbReference>
<dbReference type="GO" id="GO:0003723">
    <property type="term" value="F:RNA binding"/>
    <property type="evidence" value="ECO:0007669"/>
    <property type="project" value="UniProtKB-KW"/>
</dbReference>
<dbReference type="GO" id="GO:0006397">
    <property type="term" value="P:mRNA processing"/>
    <property type="evidence" value="ECO:0007669"/>
    <property type="project" value="UniProtKB-KW"/>
</dbReference>
<dbReference type="GO" id="GO:0008380">
    <property type="term" value="P:RNA splicing"/>
    <property type="evidence" value="ECO:0007669"/>
    <property type="project" value="UniProtKB-UniRule"/>
</dbReference>
<dbReference type="GO" id="GO:0008033">
    <property type="term" value="P:tRNA processing"/>
    <property type="evidence" value="ECO:0007669"/>
    <property type="project" value="UniProtKB-KW"/>
</dbReference>
<dbReference type="HAMAP" id="MF_01390">
    <property type="entry name" value="MatK"/>
    <property type="match status" value="1"/>
</dbReference>
<dbReference type="InterPro" id="IPR024937">
    <property type="entry name" value="Domain_X"/>
</dbReference>
<dbReference type="InterPro" id="IPR002866">
    <property type="entry name" value="Maturase_MatK"/>
</dbReference>
<dbReference type="InterPro" id="IPR024942">
    <property type="entry name" value="Maturase_MatK_N"/>
</dbReference>
<dbReference type="PANTHER" id="PTHR34811">
    <property type="entry name" value="MATURASE K"/>
    <property type="match status" value="1"/>
</dbReference>
<dbReference type="PANTHER" id="PTHR34811:SF1">
    <property type="entry name" value="MATURASE K"/>
    <property type="match status" value="1"/>
</dbReference>
<dbReference type="Pfam" id="PF01348">
    <property type="entry name" value="Intron_maturas2"/>
    <property type="match status" value="1"/>
</dbReference>
<dbReference type="Pfam" id="PF01824">
    <property type="entry name" value="MatK_N"/>
    <property type="match status" value="1"/>
</dbReference>
<organism>
    <name type="scientific">Acer campestre</name>
    <name type="common">Field maple</name>
    <dbReference type="NCBI Taxonomy" id="66205"/>
    <lineage>
        <taxon>Eukaryota</taxon>
        <taxon>Viridiplantae</taxon>
        <taxon>Streptophyta</taxon>
        <taxon>Embryophyta</taxon>
        <taxon>Tracheophyta</taxon>
        <taxon>Spermatophyta</taxon>
        <taxon>Magnoliopsida</taxon>
        <taxon>eudicotyledons</taxon>
        <taxon>Gunneridae</taxon>
        <taxon>Pentapetalae</taxon>
        <taxon>rosids</taxon>
        <taxon>malvids</taxon>
        <taxon>Sapindales</taxon>
        <taxon>Sapindaceae</taxon>
        <taxon>Hippocastanoideae</taxon>
        <taxon>Acereae</taxon>
        <taxon>Acer</taxon>
    </lineage>
</organism>
<sequence length="512" mass="61003">MKEYQIHLELDRSQQNNFLYPLLFREYIYALAHDHGLNRSTIPLENGGYDNKSSSLSVKRLISRTYQRIHLSIYAKDSNPNQFIGHNNKFYSQMISEGFSVIVEIPFSLRLVAFLEGKEMAKSQNFQSIHSIFPFFENNFSHLHYVLDVLIPYPIRPEILVRTFRYWVKDASSLHLLRFFLHEYFNWNSLITPKKSNSIFSTRNPRFFLFLYNSHVYEYESIFFFLRNQSSHLRSTSSGLLFERISFYGKVEDLVQVFVNDFQDNLWLFKHPIMHYVRYQGKSVLASKDMPLLMNKWKYYLVNLWQWHFHVWSQPGRIHINHLYKDYIDFLGYLSRGRLNTLVVRSQMLENAFLIDNAMKQFETTVPIIPLIGSLTTARFCNSLGHPISKPTWADSSDSYIIDRFMRICRNLSHYHSGSSKKKSLYRIKYILRVSCVKSLVRKHKSTVRVFLKRLGSEFLEEFFTEEEHVLSLIFPRALFTSRRLYRGRVWYLDIICINDLVNHDKLEIVPN</sequence>
<protein>
    <recommendedName>
        <fullName evidence="1">Maturase K</fullName>
    </recommendedName>
    <alternativeName>
        <fullName evidence="1">Intron maturase</fullName>
    </alternativeName>
</protein>
<accession>Q8SM90</accession>
<name>MATK_ACECA</name>
<keyword id="KW-0150">Chloroplast</keyword>
<keyword id="KW-0507">mRNA processing</keyword>
<keyword id="KW-0934">Plastid</keyword>
<keyword id="KW-0694">RNA-binding</keyword>
<keyword id="KW-0819">tRNA processing</keyword>
<evidence type="ECO:0000255" key="1">
    <source>
        <dbReference type="HAMAP-Rule" id="MF_01390"/>
    </source>
</evidence>
<comment type="function">
    <text evidence="1">Usually encoded in the trnK tRNA gene intron. Probably assists in splicing its own and other chloroplast group II introns.</text>
</comment>
<comment type="subcellular location">
    <subcellularLocation>
        <location>Plastid</location>
        <location>Chloroplast</location>
    </subcellularLocation>
</comment>
<comment type="similarity">
    <text evidence="1">Belongs to the intron maturase 2 family. MatK subfamily.</text>
</comment>
<feature type="chain" id="PRO_0000143199" description="Maturase K">
    <location>
        <begin position="1"/>
        <end position="512"/>
    </location>
</feature>
<reference key="1">
    <citation type="submission" date="2002-03" db="EMBL/GenBank/DDBJ databases">
        <title>Chloroplast DNA variation of Acer campestre, A. monspessulanum and related species in Europe.</title>
        <authorList>
            <person name="Bittkau C."/>
            <person name="Mueller-Starck G."/>
        </authorList>
    </citation>
    <scope>NUCLEOTIDE SEQUENCE [GENOMIC DNA]</scope>
    <source>
        <strain>24/2 AC 01</strain>
    </source>
</reference>
<gene>
    <name evidence="1" type="primary">matK</name>
</gene>
<geneLocation type="chloroplast"/>